<gene>
    <name evidence="1" type="primary">cca</name>
    <name type="ordered locus">SE_1145</name>
</gene>
<organism>
    <name type="scientific">Staphylococcus epidermidis (strain ATCC 12228 / FDA PCI 1200)</name>
    <dbReference type="NCBI Taxonomy" id="176280"/>
    <lineage>
        <taxon>Bacteria</taxon>
        <taxon>Bacillati</taxon>
        <taxon>Bacillota</taxon>
        <taxon>Bacilli</taxon>
        <taxon>Bacillales</taxon>
        <taxon>Staphylococcaceae</taxon>
        <taxon>Staphylococcus</taxon>
    </lineage>
</organism>
<name>CCA_STAES</name>
<dbReference type="EC" id="2.7.7.72" evidence="1"/>
<dbReference type="EMBL" id="AE015929">
    <property type="protein sequence ID" value="AAO04742.1"/>
    <property type="molecule type" value="Genomic_DNA"/>
</dbReference>
<dbReference type="RefSeq" id="NP_764700.1">
    <property type="nucleotide sequence ID" value="NC_004461.1"/>
</dbReference>
<dbReference type="RefSeq" id="WP_001831104.1">
    <property type="nucleotide sequence ID" value="NZ_WBME01000006.1"/>
</dbReference>
<dbReference type="SMR" id="Q8CP70"/>
<dbReference type="KEGG" id="sep:SE_1145"/>
<dbReference type="PATRIC" id="fig|176280.10.peg.1118"/>
<dbReference type="eggNOG" id="COG0617">
    <property type="taxonomic scope" value="Bacteria"/>
</dbReference>
<dbReference type="HOGENOM" id="CLU_015961_3_0_9"/>
<dbReference type="OrthoDB" id="9805698at2"/>
<dbReference type="Proteomes" id="UP000001411">
    <property type="component" value="Chromosome"/>
</dbReference>
<dbReference type="GO" id="GO:0005524">
    <property type="term" value="F:ATP binding"/>
    <property type="evidence" value="ECO:0007669"/>
    <property type="project" value="UniProtKB-UniRule"/>
</dbReference>
<dbReference type="GO" id="GO:0004810">
    <property type="term" value="F:CCA tRNA nucleotidyltransferase activity"/>
    <property type="evidence" value="ECO:0007669"/>
    <property type="project" value="UniProtKB-UniRule"/>
</dbReference>
<dbReference type="GO" id="GO:0000287">
    <property type="term" value="F:magnesium ion binding"/>
    <property type="evidence" value="ECO:0007669"/>
    <property type="project" value="UniProtKB-UniRule"/>
</dbReference>
<dbReference type="GO" id="GO:0000049">
    <property type="term" value="F:tRNA binding"/>
    <property type="evidence" value="ECO:0007669"/>
    <property type="project" value="UniProtKB-UniRule"/>
</dbReference>
<dbReference type="GO" id="GO:0042245">
    <property type="term" value="P:RNA repair"/>
    <property type="evidence" value="ECO:0007669"/>
    <property type="project" value="UniProtKB-KW"/>
</dbReference>
<dbReference type="GO" id="GO:0001680">
    <property type="term" value="P:tRNA 3'-terminal CCA addition"/>
    <property type="evidence" value="ECO:0007669"/>
    <property type="project" value="UniProtKB-UniRule"/>
</dbReference>
<dbReference type="CDD" id="cd05398">
    <property type="entry name" value="NT_ClassII-CCAase"/>
    <property type="match status" value="1"/>
</dbReference>
<dbReference type="Gene3D" id="1.10.246.80">
    <property type="match status" value="1"/>
</dbReference>
<dbReference type="Gene3D" id="3.30.460.10">
    <property type="entry name" value="Beta Polymerase, domain 2"/>
    <property type="match status" value="1"/>
</dbReference>
<dbReference type="Gene3D" id="1.10.3090.10">
    <property type="entry name" value="cca-adding enzyme, domain 2"/>
    <property type="match status" value="1"/>
</dbReference>
<dbReference type="HAMAP" id="MF_01263">
    <property type="entry name" value="CCA_bact_type3"/>
    <property type="match status" value="1"/>
</dbReference>
<dbReference type="InterPro" id="IPR050264">
    <property type="entry name" value="Bact_CCA-adding_enz_type3_sf"/>
</dbReference>
<dbReference type="InterPro" id="IPR032810">
    <property type="entry name" value="CCA-adding_enz_C"/>
</dbReference>
<dbReference type="InterPro" id="IPR023068">
    <property type="entry name" value="CCA-adding_enz_firmicutes"/>
</dbReference>
<dbReference type="InterPro" id="IPR043519">
    <property type="entry name" value="NT_sf"/>
</dbReference>
<dbReference type="InterPro" id="IPR002646">
    <property type="entry name" value="PolA_pol_head_dom"/>
</dbReference>
<dbReference type="InterPro" id="IPR032828">
    <property type="entry name" value="PolyA_RNA-bd"/>
</dbReference>
<dbReference type="NCBIfam" id="NF009814">
    <property type="entry name" value="PRK13299.1"/>
    <property type="match status" value="1"/>
</dbReference>
<dbReference type="PANTHER" id="PTHR46173">
    <property type="entry name" value="CCA TRNA NUCLEOTIDYLTRANSFERASE 1, MITOCHONDRIAL"/>
    <property type="match status" value="1"/>
</dbReference>
<dbReference type="PANTHER" id="PTHR46173:SF1">
    <property type="entry name" value="CCA TRNA NUCLEOTIDYLTRANSFERASE 1, MITOCHONDRIAL"/>
    <property type="match status" value="1"/>
</dbReference>
<dbReference type="Pfam" id="PF01743">
    <property type="entry name" value="PolyA_pol"/>
    <property type="match status" value="1"/>
</dbReference>
<dbReference type="Pfam" id="PF12627">
    <property type="entry name" value="PolyA_pol_RNAbd"/>
    <property type="match status" value="1"/>
</dbReference>
<dbReference type="Pfam" id="PF13735">
    <property type="entry name" value="tRNA_NucTran2_2"/>
    <property type="match status" value="1"/>
</dbReference>
<dbReference type="SUPFAM" id="SSF81301">
    <property type="entry name" value="Nucleotidyltransferase"/>
    <property type="match status" value="1"/>
</dbReference>
<dbReference type="SUPFAM" id="SSF81891">
    <property type="entry name" value="Poly A polymerase C-terminal region-like"/>
    <property type="match status" value="1"/>
</dbReference>
<accession>Q8CP70</accession>
<proteinExistence type="inferred from homology"/>
<protein>
    <recommendedName>
        <fullName evidence="1">CCA-adding enzyme</fullName>
        <ecNumber evidence="1">2.7.7.72</ecNumber>
    </recommendedName>
    <alternativeName>
        <fullName evidence="1">CCA tRNA nucleotidyltransferase</fullName>
    </alternativeName>
    <alternativeName>
        <fullName evidence="1">tRNA CCA-pyrophosphorylase</fullName>
    </alternativeName>
    <alternativeName>
        <fullName evidence="1">tRNA adenylyl-/cytidylyl- transferase</fullName>
    </alternativeName>
    <alternativeName>
        <fullName evidence="1">tRNA nucleotidyltransferase</fullName>
    </alternativeName>
    <alternativeName>
        <fullName evidence="1">tRNA-NT</fullName>
    </alternativeName>
</protein>
<comment type="function">
    <text evidence="1">Catalyzes the addition and repair of the essential 3'-terminal CCA sequence in tRNAs without using a nucleic acid template. Adds these three nucleotides in the order of C, C, and A to the tRNA nucleotide-73, using CTP and ATP as substrates and producing inorganic pyrophosphate. tRNA 3'-terminal CCA addition is required both for tRNA processing and repair. Also involved in tRNA surveillance by mediating tandem CCA addition to generate a CCACCA at the 3' terminus of unstable tRNAs. While stable tRNAs receive only 3'-terminal CCA, unstable tRNAs are marked with CCACCA and rapidly degraded.</text>
</comment>
<comment type="catalytic activity">
    <reaction evidence="1">
        <text>a tRNA precursor + 2 CTP + ATP = a tRNA with a 3' CCA end + 3 diphosphate</text>
        <dbReference type="Rhea" id="RHEA:14433"/>
        <dbReference type="Rhea" id="RHEA-COMP:10465"/>
        <dbReference type="Rhea" id="RHEA-COMP:10468"/>
        <dbReference type="ChEBI" id="CHEBI:30616"/>
        <dbReference type="ChEBI" id="CHEBI:33019"/>
        <dbReference type="ChEBI" id="CHEBI:37563"/>
        <dbReference type="ChEBI" id="CHEBI:74896"/>
        <dbReference type="ChEBI" id="CHEBI:83071"/>
        <dbReference type="EC" id="2.7.7.72"/>
    </reaction>
</comment>
<comment type="catalytic activity">
    <reaction evidence="1">
        <text>a tRNA with a 3' CCA end + 2 CTP + ATP = a tRNA with a 3' CCACCA end + 3 diphosphate</text>
        <dbReference type="Rhea" id="RHEA:76235"/>
        <dbReference type="Rhea" id="RHEA-COMP:10468"/>
        <dbReference type="Rhea" id="RHEA-COMP:18655"/>
        <dbReference type="ChEBI" id="CHEBI:30616"/>
        <dbReference type="ChEBI" id="CHEBI:33019"/>
        <dbReference type="ChEBI" id="CHEBI:37563"/>
        <dbReference type="ChEBI" id="CHEBI:83071"/>
        <dbReference type="ChEBI" id="CHEBI:195187"/>
    </reaction>
    <physiologicalReaction direction="left-to-right" evidence="1">
        <dbReference type="Rhea" id="RHEA:76236"/>
    </physiologicalReaction>
</comment>
<comment type="cofactor">
    <cofactor evidence="1">
        <name>Mg(2+)</name>
        <dbReference type="ChEBI" id="CHEBI:18420"/>
    </cofactor>
</comment>
<comment type="subunit">
    <text evidence="1">Homodimer.</text>
</comment>
<comment type="miscellaneous">
    <text evidence="1">A single active site specifically recognizes both ATP and CTP and is responsible for their addition.</text>
</comment>
<comment type="similarity">
    <text evidence="1">Belongs to the tRNA nucleotidyltransferase/poly(A) polymerase family. Bacterial CCA-adding enzyme type 3 subfamily.</text>
</comment>
<feature type="chain" id="PRO_0000139051" description="CCA-adding enzyme">
    <location>
        <begin position="1"/>
        <end position="400"/>
    </location>
</feature>
<feature type="binding site" evidence="1">
    <location>
        <position position="28"/>
    </location>
    <ligand>
        <name>ATP</name>
        <dbReference type="ChEBI" id="CHEBI:30616"/>
    </ligand>
</feature>
<feature type="binding site" evidence="1">
    <location>
        <position position="28"/>
    </location>
    <ligand>
        <name>CTP</name>
        <dbReference type="ChEBI" id="CHEBI:37563"/>
    </ligand>
</feature>
<feature type="binding site" evidence="1">
    <location>
        <position position="31"/>
    </location>
    <ligand>
        <name>ATP</name>
        <dbReference type="ChEBI" id="CHEBI:30616"/>
    </ligand>
</feature>
<feature type="binding site" evidence="1">
    <location>
        <position position="31"/>
    </location>
    <ligand>
        <name>CTP</name>
        <dbReference type="ChEBI" id="CHEBI:37563"/>
    </ligand>
</feature>
<feature type="binding site" evidence="1">
    <location>
        <position position="41"/>
    </location>
    <ligand>
        <name>Mg(2+)</name>
        <dbReference type="ChEBI" id="CHEBI:18420"/>
    </ligand>
</feature>
<feature type="binding site" evidence="1">
    <location>
        <position position="43"/>
    </location>
    <ligand>
        <name>Mg(2+)</name>
        <dbReference type="ChEBI" id="CHEBI:18420"/>
    </ligand>
</feature>
<feature type="binding site" evidence="1">
    <location>
        <position position="112"/>
    </location>
    <ligand>
        <name>ATP</name>
        <dbReference type="ChEBI" id="CHEBI:30616"/>
    </ligand>
</feature>
<feature type="binding site" evidence="1">
    <location>
        <position position="112"/>
    </location>
    <ligand>
        <name>CTP</name>
        <dbReference type="ChEBI" id="CHEBI:37563"/>
    </ligand>
</feature>
<feature type="binding site" evidence="1">
    <location>
        <position position="155"/>
    </location>
    <ligand>
        <name>ATP</name>
        <dbReference type="ChEBI" id="CHEBI:30616"/>
    </ligand>
</feature>
<feature type="binding site" evidence="1">
    <location>
        <position position="155"/>
    </location>
    <ligand>
        <name>CTP</name>
        <dbReference type="ChEBI" id="CHEBI:37563"/>
    </ligand>
</feature>
<feature type="binding site" evidence="1">
    <location>
        <position position="158"/>
    </location>
    <ligand>
        <name>ATP</name>
        <dbReference type="ChEBI" id="CHEBI:30616"/>
    </ligand>
</feature>
<feature type="binding site" evidence="1">
    <location>
        <position position="158"/>
    </location>
    <ligand>
        <name>CTP</name>
        <dbReference type="ChEBI" id="CHEBI:37563"/>
    </ligand>
</feature>
<feature type="binding site" evidence="1">
    <location>
        <position position="161"/>
    </location>
    <ligand>
        <name>ATP</name>
        <dbReference type="ChEBI" id="CHEBI:30616"/>
    </ligand>
</feature>
<feature type="binding site" evidence="1">
    <location>
        <position position="161"/>
    </location>
    <ligand>
        <name>CTP</name>
        <dbReference type="ChEBI" id="CHEBI:37563"/>
    </ligand>
</feature>
<feature type="binding site" evidence="1">
    <location>
        <position position="164"/>
    </location>
    <ligand>
        <name>ATP</name>
        <dbReference type="ChEBI" id="CHEBI:30616"/>
    </ligand>
</feature>
<feature type="binding site" evidence="1">
    <location>
        <position position="164"/>
    </location>
    <ligand>
        <name>CTP</name>
        <dbReference type="ChEBI" id="CHEBI:37563"/>
    </ligand>
</feature>
<sequence>MSHEIFEQAKPILKKIQNKGFKAYFVGGSVRDYIMQRPIHDVDITTSATPDEIESIFDKTIPVGKEHGTINVVFQNDNYEITTFRSEDEYIDHRRPSEVYFVRDLYQDVQRRDFTMNAIAMDLNYRLYDYFNGQQDINNRVIRTVGVPSERFSEDALRIIRGLRFQSQLNFQIDSDTLHAMSSQISDIQYLSVERVVVELKKLIMGNNVKQSFEVMQNMKAFNYIPFFKSFEMSHLHIDEPITFELWIAILIVQQPKDIQLSTLKISNQEKATIKKWVTLIQTLPKIQSKQSLITLVYDYNLNDIEILLSLHHLLKQNGLTTANHLIINEISIREANEKLPIHCRKELAINGKDILNHTNKNSGPWLKDTLREIEIAVISNQIVNTKEEILEWVDAHVKI</sequence>
<keyword id="KW-0067">ATP-binding</keyword>
<keyword id="KW-0460">Magnesium</keyword>
<keyword id="KW-0479">Metal-binding</keyword>
<keyword id="KW-0547">Nucleotide-binding</keyword>
<keyword id="KW-0548">Nucleotidyltransferase</keyword>
<keyword id="KW-0692">RNA repair</keyword>
<keyword id="KW-0694">RNA-binding</keyword>
<keyword id="KW-0808">Transferase</keyword>
<keyword id="KW-0819">tRNA processing</keyword>
<reference key="1">
    <citation type="journal article" date="2003" name="Mol. Microbiol.">
        <title>Genome-based analysis of virulence genes in a non-biofilm-forming Staphylococcus epidermidis strain (ATCC 12228).</title>
        <authorList>
            <person name="Zhang Y.-Q."/>
            <person name="Ren S.-X."/>
            <person name="Li H.-L."/>
            <person name="Wang Y.-X."/>
            <person name="Fu G."/>
            <person name="Yang J."/>
            <person name="Qin Z.-Q."/>
            <person name="Miao Y.-G."/>
            <person name="Wang W.-Y."/>
            <person name="Chen R.-S."/>
            <person name="Shen Y."/>
            <person name="Chen Z."/>
            <person name="Yuan Z.-H."/>
            <person name="Zhao G.-P."/>
            <person name="Qu D."/>
            <person name="Danchin A."/>
            <person name="Wen Y.-M."/>
        </authorList>
    </citation>
    <scope>NUCLEOTIDE SEQUENCE [LARGE SCALE GENOMIC DNA]</scope>
    <source>
        <strain>ATCC 12228 / FDA PCI 1200</strain>
    </source>
</reference>
<evidence type="ECO:0000255" key="1">
    <source>
        <dbReference type="HAMAP-Rule" id="MF_01263"/>
    </source>
</evidence>